<gene>
    <name evidence="1" type="primary">rlmH</name>
    <name type="ordered locus">UU180</name>
</gene>
<protein>
    <recommendedName>
        <fullName evidence="1">Ribosomal RNA large subunit methyltransferase H</fullName>
        <ecNumber evidence="1">2.1.1.177</ecNumber>
    </recommendedName>
    <alternativeName>
        <fullName evidence="1">23S rRNA (pseudouridine1915-N3)-methyltransferase</fullName>
    </alternativeName>
    <alternativeName>
        <fullName evidence="1">23S rRNA m3Psi1915 methyltransferase</fullName>
    </alternativeName>
    <alternativeName>
        <fullName evidence="1">rRNA (pseudouridine-N3-)-methyltransferase RlmH</fullName>
    </alternativeName>
</protein>
<accession>Q9PQW3</accession>
<evidence type="ECO:0000255" key="1">
    <source>
        <dbReference type="HAMAP-Rule" id="MF_00658"/>
    </source>
</evidence>
<proteinExistence type="inferred from homology"/>
<dbReference type="EC" id="2.1.1.177" evidence="1"/>
<dbReference type="EMBL" id="AF222894">
    <property type="protein sequence ID" value="AAF30587.1"/>
    <property type="molecule type" value="Genomic_DNA"/>
</dbReference>
<dbReference type="RefSeq" id="WP_006688906.1">
    <property type="nucleotide sequence ID" value="NC_002162.1"/>
</dbReference>
<dbReference type="SMR" id="Q9PQW3"/>
<dbReference type="STRING" id="273119.UU180"/>
<dbReference type="EnsemblBacteria" id="AAF30587">
    <property type="protein sequence ID" value="AAF30587"/>
    <property type="gene ID" value="UU180"/>
</dbReference>
<dbReference type="GeneID" id="29672634"/>
<dbReference type="KEGG" id="uur:UU180"/>
<dbReference type="eggNOG" id="COG1576">
    <property type="taxonomic scope" value="Bacteria"/>
</dbReference>
<dbReference type="HOGENOM" id="CLU_100552_0_0_14"/>
<dbReference type="OrthoDB" id="9806643at2"/>
<dbReference type="Proteomes" id="UP000000423">
    <property type="component" value="Chromosome"/>
</dbReference>
<dbReference type="GO" id="GO:0005737">
    <property type="term" value="C:cytoplasm"/>
    <property type="evidence" value="ECO:0007669"/>
    <property type="project" value="UniProtKB-SubCell"/>
</dbReference>
<dbReference type="GO" id="GO:0070038">
    <property type="term" value="F:rRNA (pseudouridine-N3-)-methyltransferase activity"/>
    <property type="evidence" value="ECO:0007669"/>
    <property type="project" value="UniProtKB-UniRule"/>
</dbReference>
<dbReference type="CDD" id="cd18081">
    <property type="entry name" value="RlmH-like"/>
    <property type="match status" value="1"/>
</dbReference>
<dbReference type="Gene3D" id="3.40.1280.10">
    <property type="match status" value="1"/>
</dbReference>
<dbReference type="HAMAP" id="MF_00658">
    <property type="entry name" value="23SrRNA_methyltr_H"/>
    <property type="match status" value="1"/>
</dbReference>
<dbReference type="InterPro" id="IPR029028">
    <property type="entry name" value="Alpha/beta_knot_MTases"/>
</dbReference>
<dbReference type="InterPro" id="IPR003742">
    <property type="entry name" value="RlmH-like"/>
</dbReference>
<dbReference type="InterPro" id="IPR029026">
    <property type="entry name" value="tRNA_m1G_MTases_N"/>
</dbReference>
<dbReference type="PANTHER" id="PTHR33603">
    <property type="entry name" value="METHYLTRANSFERASE"/>
    <property type="match status" value="1"/>
</dbReference>
<dbReference type="PANTHER" id="PTHR33603:SF1">
    <property type="entry name" value="RIBOSOMAL RNA LARGE SUBUNIT METHYLTRANSFERASE H"/>
    <property type="match status" value="1"/>
</dbReference>
<dbReference type="Pfam" id="PF02590">
    <property type="entry name" value="SPOUT_MTase"/>
    <property type="match status" value="1"/>
</dbReference>
<dbReference type="PIRSF" id="PIRSF004505">
    <property type="entry name" value="MT_bac"/>
    <property type="match status" value="1"/>
</dbReference>
<dbReference type="SUPFAM" id="SSF75217">
    <property type="entry name" value="alpha/beta knot"/>
    <property type="match status" value="1"/>
</dbReference>
<comment type="function">
    <text evidence="1">Specifically methylates the pseudouridine at position 1915 (m3Psi1915) in 23S rRNA.</text>
</comment>
<comment type="catalytic activity">
    <reaction evidence="1">
        <text>pseudouridine(1915) in 23S rRNA + S-adenosyl-L-methionine = N(3)-methylpseudouridine(1915) in 23S rRNA + S-adenosyl-L-homocysteine + H(+)</text>
        <dbReference type="Rhea" id="RHEA:42752"/>
        <dbReference type="Rhea" id="RHEA-COMP:10221"/>
        <dbReference type="Rhea" id="RHEA-COMP:10222"/>
        <dbReference type="ChEBI" id="CHEBI:15378"/>
        <dbReference type="ChEBI" id="CHEBI:57856"/>
        <dbReference type="ChEBI" id="CHEBI:59789"/>
        <dbReference type="ChEBI" id="CHEBI:65314"/>
        <dbReference type="ChEBI" id="CHEBI:74486"/>
        <dbReference type="EC" id="2.1.1.177"/>
    </reaction>
</comment>
<comment type="subunit">
    <text evidence="1">Homodimer.</text>
</comment>
<comment type="subcellular location">
    <subcellularLocation>
        <location evidence="1">Cytoplasm</location>
    </subcellularLocation>
</comment>
<comment type="similarity">
    <text evidence="1">Belongs to the RNA methyltransferase RlmH family.</text>
</comment>
<reference key="1">
    <citation type="journal article" date="2000" name="Nature">
        <title>The complete sequence of the mucosal pathogen Ureaplasma urealyticum.</title>
        <authorList>
            <person name="Glass J.I."/>
            <person name="Lefkowitz E.J."/>
            <person name="Glass J.S."/>
            <person name="Heiner C.R."/>
            <person name="Chen E.Y."/>
            <person name="Cassell G.H."/>
        </authorList>
    </citation>
    <scope>NUCLEOTIDE SEQUENCE [LARGE SCALE GENOMIC DNA]</scope>
    <source>
        <strain>ATCC 700970</strain>
    </source>
</reference>
<name>RLMH_UREPA</name>
<keyword id="KW-0963">Cytoplasm</keyword>
<keyword id="KW-0489">Methyltransferase</keyword>
<keyword id="KW-1185">Reference proteome</keyword>
<keyword id="KW-0698">rRNA processing</keyword>
<keyword id="KW-0949">S-adenosyl-L-methionine</keyword>
<keyword id="KW-0808">Transferase</keyword>
<sequence length="159" mass="18245">MMIKIISVGKLKQKAFVDLINDYLKRINHYLKCQEIVVSDEPEPVQISNKSLEQIKSKEASKIFKNINQNDFVIALIIESNIISSETLAKKIQQWLNTFSHDICFIIGGSNGLHESIYERANYHLSMSKMTFAHGLAKVMLCEQIYRALSILNNGKYHK</sequence>
<organism>
    <name type="scientific">Ureaplasma parvum serovar 3 (strain ATCC 700970)</name>
    <dbReference type="NCBI Taxonomy" id="273119"/>
    <lineage>
        <taxon>Bacteria</taxon>
        <taxon>Bacillati</taxon>
        <taxon>Mycoplasmatota</taxon>
        <taxon>Mycoplasmoidales</taxon>
        <taxon>Mycoplasmoidaceae</taxon>
        <taxon>Ureaplasma</taxon>
    </lineage>
</organism>
<feature type="chain" id="PRO_0000198205" description="Ribosomal RNA large subunit methyltransferase H">
    <location>
        <begin position="1"/>
        <end position="159"/>
    </location>
</feature>
<feature type="binding site" evidence="1">
    <location>
        <position position="76"/>
    </location>
    <ligand>
        <name>S-adenosyl-L-methionine</name>
        <dbReference type="ChEBI" id="CHEBI:59789"/>
    </ligand>
</feature>
<feature type="binding site" evidence="1">
    <location>
        <position position="108"/>
    </location>
    <ligand>
        <name>S-adenosyl-L-methionine</name>
        <dbReference type="ChEBI" id="CHEBI:59789"/>
    </ligand>
</feature>
<feature type="binding site" evidence="1">
    <location>
        <begin position="127"/>
        <end position="132"/>
    </location>
    <ligand>
        <name>S-adenosyl-L-methionine</name>
        <dbReference type="ChEBI" id="CHEBI:59789"/>
    </ligand>
</feature>